<sequence length="538" mass="60911">MDTTELTQVEGSMMAVTRLATHPVLTFFAILLVAILLWYMIPYFTSPIRSRRGPLLASLTNYWRMYHAAGGSMHLVSYALHARYGPVVRMAPNYLDLDYPSLISTCLDSHGVWKKTEWHGISGVKLGNKVLYNIFSECNPAEHAQIKKPVAKYFSSTGVSVMEPHINNVLAFFVKQLDDQFTELAGFGKPLKFDEWASFYAWDTIAQSTWSRRAGHLEHAFDFDGMVDTSARVMDYLVTVGMQPSLDRFLDKNPIFRIGPPSFVPVANAAFNHLTKRRSGEDDHDPSKPDFLDCYLDAMKKYPEVVDEPRLMSYILVNVAAGVDTTATTLRAIFYLALKDRRVWEKLEAQILDASFTKLPVSYSQARAVPYLEAVIRESMRLWPGSCFAQERYVPPGGLTLPDGSFVPEGVAVGFNAYVIHRNKNVWGDDAEEFRPERWLQGEDESTERFKDRLRLMNSSDLSFGAGSRKCLGVNFATMEVYKTVATLIAVFEFELADPAREWKVHNSMFPRQSGIDLRIKRREGVTVPLGLDLGKEF</sequence>
<organism>
    <name type="scientific">Aspergillus candidus</name>
    <dbReference type="NCBI Taxonomy" id="41067"/>
    <lineage>
        <taxon>Eukaryota</taxon>
        <taxon>Fungi</taxon>
        <taxon>Dikarya</taxon>
        <taxon>Ascomycota</taxon>
        <taxon>Pezizomycotina</taxon>
        <taxon>Eurotiomycetes</taxon>
        <taxon>Eurotiomycetidae</taxon>
        <taxon>Eurotiales</taxon>
        <taxon>Aspergillaceae</taxon>
        <taxon>Aspergillus</taxon>
        <taxon>Aspergillus subgen. Circumdati</taxon>
    </lineage>
</organism>
<gene>
    <name evidence="4" type="primary">cfoH</name>
    <name type="ORF">BDW47DRAFT_111391</name>
</gene>
<reference key="1">
    <citation type="submission" date="2017-12" db="EMBL/GenBank/DDBJ databases">
        <authorList>
            <consortium name="DOE Joint Genome Institute"/>
            <person name="Haridas S."/>
            <person name="Kjaerbolling I."/>
            <person name="Vesth T.C."/>
            <person name="Frisvad J.C."/>
            <person name="Nybo J.L."/>
            <person name="Theobald S."/>
            <person name="Kuo A."/>
            <person name="Bowyer P."/>
            <person name="Matsuda Y."/>
            <person name="Mondo S."/>
            <person name="Lyhne E.K."/>
            <person name="Kogle M.E."/>
            <person name="Clum A."/>
            <person name="Lipzen A."/>
            <person name="Salamov A."/>
            <person name="Ngan C.Y."/>
            <person name="Daum C."/>
            <person name="Chiniquy J."/>
            <person name="Barry K."/>
            <person name="LaButti K."/>
            <person name="Simmons B.A."/>
            <person name="Magnuson J.K."/>
            <person name="Mortensen U.H."/>
            <person name="Larsen T.O."/>
            <person name="Grigoriev I.V."/>
            <person name="Baker S.E."/>
            <person name="Andersen M.R."/>
            <person name="Nordberg H.P."/>
            <person name="Cantor M.N."/>
            <person name="Hua S.X."/>
        </authorList>
    </citation>
    <scope>NUCLEOTIDE SEQUENCE [LARGE SCALE GENOMIC DNA]</scope>
    <source>
        <strain>CBS 102.13</strain>
    </source>
</reference>
<reference key="2">
    <citation type="journal article" date="2023" name="Angew. Chem. Int. Ed.">
        <title>Discovery of a Unique Flavonoid Biosynthesis Mechanism in Fungi by Genome Mining.</title>
        <authorList>
            <person name="Zhang W."/>
            <person name="Zhang X."/>
            <person name="Feng D."/>
            <person name="Liang Y."/>
            <person name="Wu Z."/>
            <person name="Du S."/>
            <person name="Zhou Y."/>
            <person name="Geng C."/>
            <person name="Men P."/>
            <person name="Fu C."/>
            <person name="Huang X."/>
            <person name="Lu X."/>
        </authorList>
    </citation>
    <scope>FUNCTION</scope>
    <scope>DISRUPTION PHENOTYPE</scope>
    <scope>PATHWAY</scope>
</reference>
<proteinExistence type="inferred from homology"/>
<accession>A0A2I2F2L0</accession>
<keyword id="KW-0284">Flavonoid biosynthesis</keyword>
<keyword id="KW-0349">Heme</keyword>
<keyword id="KW-0408">Iron</keyword>
<keyword id="KW-0472">Membrane</keyword>
<keyword id="KW-0479">Metal-binding</keyword>
<keyword id="KW-0503">Monooxygenase</keyword>
<keyword id="KW-0560">Oxidoreductase</keyword>
<keyword id="KW-1185">Reference proteome</keyword>
<keyword id="KW-0812">Transmembrane</keyword>
<keyword id="KW-1133">Transmembrane helix</keyword>
<comment type="function">
    <text evidence="3">Cytochrome P450 monooxygenase; part of the gene cluster that mediates the biosynthesis of chlorflavonin, a fungal flavonoid with acetolactate synthase inhibitory activity (PubMed:36704842). Within the pathway, cfoH is responsible for the hydroxylation of the flavonoid skeleton at position C2' (PubMed:36704842). The pathway begins with the PKS-NRPS hybrid synthetase cfoA that uses benzoic acid or p-hydroxybenzoic acid as a starter unit with four rounds of chain elongation using malonyl-CoA to form the chalcone skeleton. Then, a new type of chalcone isomerase, cfoK, catalyzes the conversion of the chalcone into a flavanone by a histidine-mediated oxa-Michael addition mechanism. The desaturation of flavanone to flavone is catalyzed by a new type of flavone synthase, the flavin mononucleotide (FMN)-dependent oxidoreductase cfoJ. Monooxygenases cfoF, cfoG, and P450 cfoH are responsible for the hydroxylation of the flavonoid skeleton at sites C3, C8, and C2', respectively. Like cfoF, the dehydratase cfoI plays also a role in the hydroxylation of position C3. Methyltransferases cfoB, cfoC, and cfoD then catalyze the methylation of C7-OH, C8-OH, and C3-OH, respectively. Finally, the monooxygenase cfoE is responsible for the chlorination of flavonoid at position C3' (PubMed:36704842).</text>
</comment>
<comment type="cofactor">
    <cofactor evidence="1">
        <name>heme</name>
        <dbReference type="ChEBI" id="CHEBI:30413"/>
    </cofactor>
</comment>
<comment type="pathway">
    <text evidence="3">Secondary metabolite biosynthesis; flavonoid biosynthesis.</text>
</comment>
<comment type="subcellular location">
    <subcellularLocation>
        <location evidence="2">Membrane</location>
        <topology evidence="2">Single-pass membrane protein</topology>
    </subcellularLocation>
</comment>
<comment type="disruption phenotype">
    <text evidence="3">Impairs the hydroxylation of the flavonoid skeleton at position C2'.</text>
</comment>
<comment type="similarity">
    <text evidence="5">Belongs to the cytochrome P450 family.</text>
</comment>
<protein>
    <recommendedName>
        <fullName evidence="4">Cytochrome P450 monooxygenase cfoH</fullName>
        <ecNumber evidence="3">1.-.-.-</ecNumber>
    </recommendedName>
    <alternativeName>
        <fullName evidence="4">Chlorflavonin biosynthesis cluster protein H</fullName>
    </alternativeName>
</protein>
<name>CFOH_ASPCN</name>
<evidence type="ECO:0000250" key="1">
    <source>
        <dbReference type="UniProtKB" id="P04798"/>
    </source>
</evidence>
<evidence type="ECO:0000255" key="2"/>
<evidence type="ECO:0000269" key="3">
    <source>
    </source>
</evidence>
<evidence type="ECO:0000303" key="4">
    <source>
    </source>
</evidence>
<evidence type="ECO:0000305" key="5"/>
<feature type="chain" id="PRO_0000459545" description="Cytochrome P450 monooxygenase cfoH">
    <location>
        <begin position="1"/>
        <end position="538"/>
    </location>
</feature>
<feature type="transmembrane region" description="Helical" evidence="2">
    <location>
        <begin position="24"/>
        <end position="44"/>
    </location>
</feature>
<feature type="binding site" description="axial binding residue" evidence="1">
    <location>
        <position position="471"/>
    </location>
    <ligand>
        <name>heme</name>
        <dbReference type="ChEBI" id="CHEBI:30413"/>
    </ligand>
    <ligandPart>
        <name>Fe</name>
        <dbReference type="ChEBI" id="CHEBI:18248"/>
    </ligandPart>
</feature>
<dbReference type="EC" id="1.-.-.-" evidence="3"/>
<dbReference type="EMBL" id="KZ559171">
    <property type="protein sequence ID" value="PLB34863.1"/>
    <property type="molecule type" value="Genomic_DNA"/>
</dbReference>
<dbReference type="STRING" id="41067.A0A2I2F2L0"/>
<dbReference type="OrthoDB" id="3934656at2759"/>
<dbReference type="UniPathway" id="UPA00154"/>
<dbReference type="Proteomes" id="UP000234585">
    <property type="component" value="Unassembled WGS sequence"/>
</dbReference>
<dbReference type="GO" id="GO:0016020">
    <property type="term" value="C:membrane"/>
    <property type="evidence" value="ECO:0007669"/>
    <property type="project" value="UniProtKB-SubCell"/>
</dbReference>
<dbReference type="GO" id="GO:0020037">
    <property type="term" value="F:heme binding"/>
    <property type="evidence" value="ECO:0007669"/>
    <property type="project" value="InterPro"/>
</dbReference>
<dbReference type="GO" id="GO:0005506">
    <property type="term" value="F:iron ion binding"/>
    <property type="evidence" value="ECO:0007669"/>
    <property type="project" value="InterPro"/>
</dbReference>
<dbReference type="GO" id="GO:0004497">
    <property type="term" value="F:monooxygenase activity"/>
    <property type="evidence" value="ECO:0007669"/>
    <property type="project" value="UniProtKB-KW"/>
</dbReference>
<dbReference type="GO" id="GO:0016705">
    <property type="term" value="F:oxidoreductase activity, acting on paired donors, with incorporation or reduction of molecular oxygen"/>
    <property type="evidence" value="ECO:0007669"/>
    <property type="project" value="InterPro"/>
</dbReference>
<dbReference type="GO" id="GO:0009813">
    <property type="term" value="P:flavonoid biosynthetic process"/>
    <property type="evidence" value="ECO:0007669"/>
    <property type="project" value="UniProtKB-UniPathway"/>
</dbReference>
<dbReference type="CDD" id="cd11060">
    <property type="entry name" value="CYP57A1-like"/>
    <property type="match status" value="1"/>
</dbReference>
<dbReference type="Gene3D" id="1.10.630.10">
    <property type="entry name" value="Cytochrome P450"/>
    <property type="match status" value="1"/>
</dbReference>
<dbReference type="InterPro" id="IPR001128">
    <property type="entry name" value="Cyt_P450"/>
</dbReference>
<dbReference type="InterPro" id="IPR017972">
    <property type="entry name" value="Cyt_P450_CS"/>
</dbReference>
<dbReference type="InterPro" id="IPR002403">
    <property type="entry name" value="Cyt_P450_E_grp-IV"/>
</dbReference>
<dbReference type="InterPro" id="IPR036396">
    <property type="entry name" value="Cyt_P450_sf"/>
</dbReference>
<dbReference type="InterPro" id="IPR050121">
    <property type="entry name" value="Cytochrome_P450_monoxygenase"/>
</dbReference>
<dbReference type="PANTHER" id="PTHR24305">
    <property type="entry name" value="CYTOCHROME P450"/>
    <property type="match status" value="1"/>
</dbReference>
<dbReference type="PANTHER" id="PTHR24305:SF232">
    <property type="entry name" value="P450, PUTATIVE (EUROFUNG)-RELATED"/>
    <property type="match status" value="1"/>
</dbReference>
<dbReference type="Pfam" id="PF00067">
    <property type="entry name" value="p450"/>
    <property type="match status" value="1"/>
</dbReference>
<dbReference type="PRINTS" id="PR00465">
    <property type="entry name" value="EP450IV"/>
</dbReference>
<dbReference type="PRINTS" id="PR00385">
    <property type="entry name" value="P450"/>
</dbReference>
<dbReference type="SUPFAM" id="SSF48264">
    <property type="entry name" value="Cytochrome P450"/>
    <property type="match status" value="1"/>
</dbReference>
<dbReference type="PROSITE" id="PS00086">
    <property type="entry name" value="CYTOCHROME_P450"/>
    <property type="match status" value="1"/>
</dbReference>